<protein>
    <recommendedName>
        <fullName evidence="25">CCN family member 3</fullName>
    </recommendedName>
    <alternativeName>
        <fullName evidence="26">Cellular communication network factor 3</fullName>
    </alternativeName>
    <alternativeName>
        <fullName>Insulin-like growth factor-binding protein 9</fullName>
        <shortName>IBP-9</shortName>
        <shortName>IGF-binding protein 9</shortName>
        <shortName>IGFBP-9</shortName>
    </alternativeName>
    <alternativeName>
        <fullName>Nephro blastoma-overexpressed gene protein homolog</fullName>
    </alternativeName>
    <alternativeName>
        <fullName>Protein NOV homolog</fullName>
        <shortName>NovH</shortName>
    </alternativeName>
</protein>
<organism>
    <name type="scientific">Homo sapiens</name>
    <name type="common">Human</name>
    <dbReference type="NCBI Taxonomy" id="9606"/>
    <lineage>
        <taxon>Eukaryota</taxon>
        <taxon>Metazoa</taxon>
        <taxon>Chordata</taxon>
        <taxon>Craniata</taxon>
        <taxon>Vertebrata</taxon>
        <taxon>Euteleostomi</taxon>
        <taxon>Mammalia</taxon>
        <taxon>Eutheria</taxon>
        <taxon>Euarchontoglires</taxon>
        <taxon>Primates</taxon>
        <taxon>Haplorrhini</taxon>
        <taxon>Catarrhini</taxon>
        <taxon>Hominidae</taxon>
        <taxon>Homo</taxon>
    </lineage>
</organism>
<comment type="function">
    <text evidence="2 9 10 11 14 15 17 18 19 20 22">Immediate-early protein playing a role in various cellular processes including proliferation, adhesion, migration, differentiation and survival (PubMed:12050162, PubMed:12695522, PubMed:15181016, PubMed:15611078, PubMed:21344378). Acts by binding to integrins or membrane receptors such as NOTCH1 (PubMed:12695522, PubMed:15611078, PubMed:21344378). Essential regulator of hematopoietic stem and progenitor cell function (PubMed:17463287). Inhibits myogenic differentiation through the activation of Notch-signaling pathway (PubMed:12050162). Inhibits vascular smooth muscle cells proliferation by increasing expression of cell-cycle regulators such as CDKN2B or CDKN1A independently of TGFB1 signaling (PubMed:20139355). Ligand of integrins ITGAV:ITGB3 and ITGA5:ITGB1, acts directly upon endothelial cells to stimulate pro-angiogenic activities and induces angiogenesis. In endothelial cells, supports cell adhesion, induces directed cell migration (chemotaxis) and promotes cell survival (PubMed:12695522). Also plays a role in cutaneous wound healing acting as integrin receptor ligand. Supports skin fibroblast adhesion through ITGA5:ITGB1 and ITGA6:ITGB1 and induces fibroblast chemotaxis through ITGAV:ITGB5. Seems to enhance bFGF-induced DNA synthesis in fibroblasts (PubMed:15611078). Involved in bone regeneration as a negative regulator (By similarity). Enhances the articular chondrocytic phenotype, whereas it repressed the one representing endochondral ossification (PubMed:21871891). Impairs pancreatic beta-cell function, inhibits beta-cell proliferation and insulin secretion (By similarity). Plays a role as negative regulator of endothelial pro-inflammatory activation reducing monocyte adhesion, its anti-inflammatory effects occur secondary to the inhibition of NF-kappaB signaling pathway (PubMed:21063504). Contributes to the control and coordination of inflammatory processes in atherosclerosis (By similarity). Attenuates inflammatory pain through regulation of IL1B- and TNF-induced MMP9, MMP2 and CCL2 expression. Inhibits MMP9 expression through ITGB1 engagement (PubMed:21871891). Brain osteoanabolic hormone (By similarity). Drives osteogenesis in osteochondral skeletal stem cells (PubMed:38987585). During lactation, maintains the maternal skeleton and viability of offspring (By similarity).</text>
</comment>
<comment type="subunit">
    <text evidence="2 9 10 11 12 14 24">Interacts with FBLN1. Interacts (via CTCK domain) with NOTCH1 (via the EGF-like repeat region) (PubMed:12050162). Interacts with GJA1/CX43 (PubMed:15181016, PubMed:15213231). Interacts with ITGA5:ITGB1, ITGAV:ITGB3 and ITGAV:ITGB5 (PubMed:12695522, PubMed:15611078). Interacts with ZDHHC22; the interaction may lead to CCN3 palmitoylation (By similarity).</text>
</comment>
<comment type="interaction">
    <interactant intactId="EBI-3904822">
        <id>P48745</id>
    </interactant>
    <interactant intactId="EBI-17183751">
        <id>X5D778</id>
        <label>ANKRD11</label>
    </interactant>
    <organismsDiffer>false</organismsDiffer>
    <experiments>3</experiments>
</comment>
<comment type="interaction">
    <interactant intactId="EBI-3904822">
        <id>P48745</id>
    </interactant>
    <interactant intactId="EBI-11574440">
        <id>Q9BWW8</id>
        <label>APOL6</label>
    </interactant>
    <organismsDiffer>false</organismsDiffer>
    <experiments>3</experiments>
</comment>
<comment type="interaction">
    <interactant intactId="EBI-3904822">
        <id>P48745</id>
    </interactant>
    <interactant intactId="EBI-6660291">
        <id>Q6NUJ2</id>
        <label>C11orf87</label>
    </interactant>
    <organismsDiffer>false</organismsDiffer>
    <experiments>3</experiments>
</comment>
<comment type="interaction">
    <interactant intactId="EBI-3904822">
        <id>P48745</id>
    </interactant>
    <interactant intactId="EBI-747133">
        <id>P27658</id>
        <label>COL8A1</label>
    </interactant>
    <organismsDiffer>false</organismsDiffer>
    <experiments>3</experiments>
</comment>
<comment type="interaction">
    <interactant intactId="EBI-3904822">
        <id>P48745</id>
    </interactant>
    <interactant intactId="EBI-6658203">
        <id>Q86YD7</id>
        <label>FAM90A1</label>
    </interactant>
    <organismsDiffer>false</organismsDiffer>
    <experiments>3</experiments>
</comment>
<comment type="interaction">
    <interactant intactId="EBI-3904822">
        <id>P48745</id>
    </interactant>
    <interactant intactId="EBI-725515">
        <id>O43559</id>
        <label>FRS3</label>
    </interactant>
    <organismsDiffer>false</organismsDiffer>
    <experiments>3</experiments>
</comment>
<comment type="interaction">
    <interactant intactId="EBI-3904822">
        <id>P48745</id>
    </interactant>
    <interactant intactId="EBI-740785">
        <id>P49639</id>
        <label>HOXA1</label>
    </interactant>
    <organismsDiffer>false</organismsDiffer>
    <experiments>4</experiments>
</comment>
<comment type="interaction">
    <interactant intactId="EBI-3904822">
        <id>P48745</id>
    </interactant>
    <interactant intactId="EBI-10250562">
        <id>Q6L8G9</id>
        <label>KRTAP5-6</label>
    </interactant>
    <organismsDiffer>false</organismsDiffer>
    <experiments>3</experiments>
</comment>
<comment type="interaction">
    <interactant intactId="EBI-3904822">
        <id>P48745</id>
    </interactant>
    <interactant intactId="EBI-11962058">
        <id>Q5T7P2</id>
        <label>LCE1A</label>
    </interactant>
    <organismsDiffer>false</organismsDiffer>
    <experiments>3</experiments>
</comment>
<comment type="interaction">
    <interactant intactId="EBI-3904822">
        <id>P48745</id>
    </interactant>
    <interactant intactId="EBI-6658837">
        <id>Q9BYE3</id>
        <label>LCE3D</label>
    </interactant>
    <organismsDiffer>false</organismsDiffer>
    <experiments>3</experiments>
</comment>
<comment type="interaction">
    <interactant intactId="EBI-3904822">
        <id>P48745</id>
    </interactant>
    <interactant intactId="EBI-2683507">
        <id>Q8N5G2</id>
        <label>MACO1</label>
    </interactant>
    <organismsDiffer>false</organismsDiffer>
    <experiments>3</experiments>
</comment>
<comment type="interaction">
    <interactant intactId="EBI-3904822">
        <id>P48745</id>
    </interactant>
    <interactant intactId="EBI-10261509">
        <id>Q8IV28</id>
        <label>NID2</label>
    </interactant>
    <organismsDiffer>false</organismsDiffer>
    <experiments>3</experiments>
</comment>
<comment type="interaction">
    <interactant intactId="EBI-3904822">
        <id>P48745</id>
    </interactant>
    <interactant intactId="EBI-17236143">
        <id>Q12837</id>
        <label>POU4F2</label>
    </interactant>
    <organismsDiffer>false</organismsDiffer>
    <experiments>3</experiments>
</comment>
<comment type="interaction">
    <interactant intactId="EBI-3904822">
        <id>P48745</id>
    </interactant>
    <interactant intactId="EBI-10253121">
        <id>Q6P9E2</id>
        <label>RECK</label>
    </interactant>
    <organismsDiffer>false</organismsDiffer>
    <experiments>3</experiments>
</comment>
<comment type="interaction">
    <interactant intactId="EBI-3904822">
        <id>P48745</id>
    </interactant>
    <interactant intactId="EBI-2509913">
        <id>Q96KP6</id>
        <label>TNIP3</label>
    </interactant>
    <organismsDiffer>false</organismsDiffer>
    <experiments>3</experiments>
</comment>
<comment type="interaction">
    <interactant intactId="EBI-3904822">
        <id>P48745</id>
    </interactant>
    <interactant intactId="EBI-373456">
        <id>Q9Y3S2</id>
        <label>ZNF330</label>
    </interactant>
    <organismsDiffer>false</organismsDiffer>
    <experiments>3</experiments>
</comment>
<comment type="subcellular location">
    <subcellularLocation>
        <location evidence="2">Secreted</location>
    </subcellularLocation>
    <subcellularLocation>
        <location evidence="11">Cytoplasm</location>
    </subcellularLocation>
    <subcellularLocation>
        <location evidence="11">Cell junction</location>
        <location evidence="11">Gap junction</location>
    </subcellularLocation>
    <text evidence="3">Localizes at the gap junction in presence of GJA1.</text>
</comment>
<comment type="tissue specificity">
    <text evidence="16 18">Expressed in endothelial cells (at protein level) (PubMed:21063504). Expressed in bone marrow and thymic cells.</text>
</comment>
<comment type="developmental stage">
    <text evidence="15">Expressed in primitive compartments of umbilical vein cord.</text>
</comment>
<comment type="induction">
    <text evidence="18 21 23">Expression is down-regulated by WT1. Expression is down-regulated by pro-inflammatory stimuli such as TNF or IL1B (PubMed:21063504, PubMed:24722330). Expression is induced by laminar shear stress and statins (PubMed:21063504).</text>
</comment>
<comment type="PTM">
    <text evidence="2">May be palmitoylated on Cys-244, which is important for extracellular secretion.</text>
</comment>
<comment type="similarity">
    <text evidence="25">Belongs to the CCN family.</text>
</comment>
<accession>P48745</accession>
<accession>B2R5X7</accession>
<accession>Q6I9S3</accession>
<accession>Q96BY5</accession>
<accession>Q9UDE4</accession>
<evidence type="ECO:0000250" key="1"/>
<evidence type="ECO:0000250" key="2">
    <source>
        <dbReference type="UniProtKB" id="Q64299"/>
    </source>
</evidence>
<evidence type="ECO:0000250" key="3">
    <source>
        <dbReference type="UniProtKB" id="Q9QZQ5"/>
    </source>
</evidence>
<evidence type="ECO:0000255" key="4"/>
<evidence type="ECO:0000255" key="5">
    <source>
        <dbReference type="PROSITE-ProRule" id="PRU00039"/>
    </source>
</evidence>
<evidence type="ECO:0000255" key="6">
    <source>
        <dbReference type="PROSITE-ProRule" id="PRU00210"/>
    </source>
</evidence>
<evidence type="ECO:0000255" key="7">
    <source>
        <dbReference type="PROSITE-ProRule" id="PRU00220"/>
    </source>
</evidence>
<evidence type="ECO:0000255" key="8">
    <source>
        <dbReference type="PROSITE-ProRule" id="PRU00653"/>
    </source>
</evidence>
<evidence type="ECO:0000269" key="9">
    <source>
    </source>
</evidence>
<evidence type="ECO:0000269" key="10">
    <source>
    </source>
</evidence>
<evidence type="ECO:0000269" key="11">
    <source>
    </source>
</evidence>
<evidence type="ECO:0000269" key="12">
    <source>
    </source>
</evidence>
<evidence type="ECO:0000269" key="13">
    <source>
    </source>
</evidence>
<evidence type="ECO:0000269" key="14">
    <source>
    </source>
</evidence>
<evidence type="ECO:0000269" key="15">
    <source>
    </source>
</evidence>
<evidence type="ECO:0000269" key="16">
    <source>
    </source>
</evidence>
<evidence type="ECO:0000269" key="17">
    <source>
    </source>
</evidence>
<evidence type="ECO:0000269" key="18">
    <source>
    </source>
</evidence>
<evidence type="ECO:0000269" key="19">
    <source>
    </source>
</evidence>
<evidence type="ECO:0000269" key="20">
    <source>
    </source>
</evidence>
<evidence type="ECO:0000269" key="21">
    <source>
    </source>
</evidence>
<evidence type="ECO:0000269" key="22">
    <source>
    </source>
</evidence>
<evidence type="ECO:0000269" key="23">
    <source>
    </source>
</evidence>
<evidence type="ECO:0000269" key="24">
    <source>
    </source>
</evidence>
<evidence type="ECO:0000305" key="25"/>
<evidence type="ECO:0000312" key="26">
    <source>
        <dbReference type="HGNC" id="HGNC:7885"/>
    </source>
</evidence>
<proteinExistence type="evidence at protein level"/>
<feature type="signal peptide" evidence="13">
    <location>
        <begin position="1"/>
        <end position="31"/>
    </location>
</feature>
<feature type="chain" id="PRO_0000014415" description="CCN family member 3">
    <location>
        <begin position="32"/>
        <end position="357"/>
    </location>
</feature>
<feature type="domain" description="IGFBP N-terminal" evidence="8">
    <location>
        <begin position="32"/>
        <end position="105"/>
    </location>
</feature>
<feature type="domain" description="VWFC" evidence="7">
    <location>
        <begin position="108"/>
        <end position="174"/>
    </location>
</feature>
<feature type="domain" description="TSP type-1" evidence="6">
    <location>
        <begin position="205"/>
        <end position="250"/>
    </location>
</feature>
<feature type="domain" description="CTCK" evidence="5">
    <location>
        <begin position="264"/>
        <end position="338"/>
    </location>
</feature>
<feature type="lipid moiety-binding region" description="S-palmitoyl cysteine" evidence="2">
    <location>
        <position position="244"/>
    </location>
</feature>
<feature type="glycosylation site" description="N-linked (GlcNAc...) asparagine" evidence="4">
    <location>
        <position position="97"/>
    </location>
</feature>
<feature type="glycosylation site" description="N-linked (GlcNAc...) asparagine" evidence="4">
    <location>
        <position position="280"/>
    </location>
</feature>
<feature type="disulfide bond" evidence="8">
    <location>
        <begin position="35"/>
        <end position="61"/>
    </location>
</feature>
<feature type="disulfide bond" evidence="8">
    <location>
        <begin position="39"/>
        <end position="63"/>
    </location>
</feature>
<feature type="disulfide bond" evidence="8">
    <location>
        <begin position="43"/>
        <end position="64"/>
    </location>
</feature>
<feature type="disulfide bond" evidence="8">
    <location>
        <begin position="50"/>
        <end position="67"/>
    </location>
</feature>
<feature type="disulfide bond" evidence="8">
    <location>
        <begin position="75"/>
        <end position="89"/>
    </location>
</feature>
<feature type="disulfide bond" evidence="8">
    <location>
        <begin position="81"/>
        <end position="102"/>
    </location>
</feature>
<feature type="disulfide bond" evidence="1">
    <location>
        <begin position="264"/>
        <end position="301"/>
    </location>
</feature>
<feature type="disulfide bond" evidence="1">
    <location>
        <begin position="281"/>
        <end position="315"/>
    </location>
</feature>
<feature type="disulfide bond" evidence="1">
    <location>
        <begin position="292"/>
        <end position="331"/>
    </location>
</feature>
<feature type="disulfide bond" evidence="1">
    <location>
        <begin position="295"/>
        <end position="333"/>
    </location>
</feature>
<feature type="disulfide bond" evidence="1">
    <location>
        <begin position="300"/>
        <end position="337"/>
    </location>
</feature>
<feature type="sequence variant" id="VAR_049568" description="In dbSNP:rs2279112.">
    <original>R</original>
    <variation>Q</variation>
    <location>
        <position position="42"/>
    </location>
</feature>
<feature type="sequence variant" id="VAR_049569" description="In dbSNP:rs11538929.">
    <original>R</original>
    <variation>H</variation>
    <location>
        <position position="233"/>
    </location>
</feature>
<feature type="sequence conflict" description="In Ref. 7." evidence="25" ref="7">
    <original>LG</original>
    <variation>CL</variation>
    <location>
        <begin position="26"/>
        <end position="27"/>
    </location>
</feature>
<feature type="sequence conflict" description="In Ref. 5; CAG33713 and 6; AAH15028." evidence="25" ref="5 6">
    <original>N</original>
    <variation>K</variation>
    <location>
        <position position="97"/>
    </location>
</feature>
<feature type="sequence conflict" description="In Ref. 4; BAG35274." evidence="25" ref="4">
    <original>R</original>
    <variation>G</variation>
    <location>
        <position position="231"/>
    </location>
</feature>
<feature type="sequence conflict" description="In Ref. 5; CAG33713." evidence="25" ref="5">
    <original>M</original>
    <variation>I</variation>
    <location>
        <position position="357"/>
    </location>
</feature>
<reference key="1">
    <citation type="journal article" date="1994" name="Oncogene">
        <title>Structural analysis of the human nov proto-oncogene and expression in Wilms tumor.</title>
        <authorList>
            <person name="Martinerie C."/>
            <person name="Huff V."/>
            <person name="Joubert I."/>
            <person name="Badzioch M."/>
            <person name="Saunders G.F."/>
            <person name="Strong L.C."/>
            <person name="Perbal B."/>
        </authorList>
    </citation>
    <scope>NUCLEOTIDE SEQUENCE [GENOMIC DNA]</scope>
    <source>
        <tissue>Placenta</tissue>
    </source>
</reference>
<reference key="2">
    <citation type="journal article" date="1996" name="Oncogene">
        <title>Regulation of nov by WT1: a potential role for nov in nephrogenesis.</title>
        <authorList>
            <person name="Martinerie C."/>
            <person name="Chevalier G."/>
            <person name="Rauscher F.J. III"/>
            <person name="Perbal B."/>
        </authorList>
    </citation>
    <scope>NUCLEOTIDE SEQUENCE [MRNA]</scope>
    <scope>INDUCTION</scope>
</reference>
<reference key="3">
    <citation type="submission" date="2002-03" db="EMBL/GenBank/DDBJ databases">
        <title>Cloning, sequencing and expression of human nov gene.</title>
        <authorList>
            <person name="Jiang D."/>
            <person name="Gou D."/>
            <person name="Li W."/>
        </authorList>
    </citation>
    <scope>NUCLEOTIDE SEQUENCE [MRNA]</scope>
</reference>
<reference key="4">
    <citation type="journal article" date="2004" name="Nat. Genet.">
        <title>Complete sequencing and characterization of 21,243 full-length human cDNAs.</title>
        <authorList>
            <person name="Ota T."/>
            <person name="Suzuki Y."/>
            <person name="Nishikawa T."/>
            <person name="Otsuki T."/>
            <person name="Sugiyama T."/>
            <person name="Irie R."/>
            <person name="Wakamatsu A."/>
            <person name="Hayashi K."/>
            <person name="Sato H."/>
            <person name="Nagai K."/>
            <person name="Kimura K."/>
            <person name="Makita H."/>
            <person name="Sekine M."/>
            <person name="Obayashi M."/>
            <person name="Nishi T."/>
            <person name="Shibahara T."/>
            <person name="Tanaka T."/>
            <person name="Ishii S."/>
            <person name="Yamamoto J."/>
            <person name="Saito K."/>
            <person name="Kawai Y."/>
            <person name="Isono Y."/>
            <person name="Nakamura Y."/>
            <person name="Nagahari K."/>
            <person name="Murakami K."/>
            <person name="Yasuda T."/>
            <person name="Iwayanagi T."/>
            <person name="Wagatsuma M."/>
            <person name="Shiratori A."/>
            <person name="Sudo H."/>
            <person name="Hosoiri T."/>
            <person name="Kaku Y."/>
            <person name="Kodaira H."/>
            <person name="Kondo H."/>
            <person name="Sugawara M."/>
            <person name="Takahashi M."/>
            <person name="Kanda K."/>
            <person name="Yokoi T."/>
            <person name="Furuya T."/>
            <person name="Kikkawa E."/>
            <person name="Omura Y."/>
            <person name="Abe K."/>
            <person name="Kamihara K."/>
            <person name="Katsuta N."/>
            <person name="Sato K."/>
            <person name="Tanikawa M."/>
            <person name="Yamazaki M."/>
            <person name="Ninomiya K."/>
            <person name="Ishibashi T."/>
            <person name="Yamashita H."/>
            <person name="Murakawa K."/>
            <person name="Fujimori K."/>
            <person name="Tanai H."/>
            <person name="Kimata M."/>
            <person name="Watanabe M."/>
            <person name="Hiraoka S."/>
            <person name="Chiba Y."/>
            <person name="Ishida S."/>
            <person name="Ono Y."/>
            <person name="Takiguchi S."/>
            <person name="Watanabe S."/>
            <person name="Yosida M."/>
            <person name="Hotuta T."/>
            <person name="Kusano J."/>
            <person name="Kanehori K."/>
            <person name="Takahashi-Fujii A."/>
            <person name="Hara H."/>
            <person name="Tanase T.-O."/>
            <person name="Nomura Y."/>
            <person name="Togiya S."/>
            <person name="Komai F."/>
            <person name="Hara R."/>
            <person name="Takeuchi K."/>
            <person name="Arita M."/>
            <person name="Imose N."/>
            <person name="Musashino K."/>
            <person name="Yuuki H."/>
            <person name="Oshima A."/>
            <person name="Sasaki N."/>
            <person name="Aotsuka S."/>
            <person name="Yoshikawa Y."/>
            <person name="Matsunawa H."/>
            <person name="Ichihara T."/>
            <person name="Shiohata N."/>
            <person name="Sano S."/>
            <person name="Moriya S."/>
            <person name="Momiyama H."/>
            <person name="Satoh N."/>
            <person name="Takami S."/>
            <person name="Terashima Y."/>
            <person name="Suzuki O."/>
            <person name="Nakagawa S."/>
            <person name="Senoh A."/>
            <person name="Mizoguchi H."/>
            <person name="Goto Y."/>
            <person name="Shimizu F."/>
            <person name="Wakebe H."/>
            <person name="Hishigaki H."/>
            <person name="Watanabe T."/>
            <person name="Sugiyama A."/>
            <person name="Takemoto M."/>
            <person name="Kawakami B."/>
            <person name="Yamazaki M."/>
            <person name="Watanabe K."/>
            <person name="Kumagai A."/>
            <person name="Itakura S."/>
            <person name="Fukuzumi Y."/>
            <person name="Fujimori Y."/>
            <person name="Komiyama M."/>
            <person name="Tashiro H."/>
            <person name="Tanigami A."/>
            <person name="Fujiwara T."/>
            <person name="Ono T."/>
            <person name="Yamada K."/>
            <person name="Fujii Y."/>
            <person name="Ozaki K."/>
            <person name="Hirao M."/>
            <person name="Ohmori Y."/>
            <person name="Kawabata A."/>
            <person name="Hikiji T."/>
            <person name="Kobatake N."/>
            <person name="Inagaki H."/>
            <person name="Ikema Y."/>
            <person name="Okamoto S."/>
            <person name="Okitani R."/>
            <person name="Kawakami T."/>
            <person name="Noguchi S."/>
            <person name="Itoh T."/>
            <person name="Shigeta K."/>
            <person name="Senba T."/>
            <person name="Matsumura K."/>
            <person name="Nakajima Y."/>
            <person name="Mizuno T."/>
            <person name="Morinaga M."/>
            <person name="Sasaki M."/>
            <person name="Togashi T."/>
            <person name="Oyama M."/>
            <person name="Hata H."/>
            <person name="Watanabe M."/>
            <person name="Komatsu T."/>
            <person name="Mizushima-Sugano J."/>
            <person name="Satoh T."/>
            <person name="Shirai Y."/>
            <person name="Takahashi Y."/>
            <person name="Nakagawa K."/>
            <person name="Okumura K."/>
            <person name="Nagase T."/>
            <person name="Nomura N."/>
            <person name="Kikuchi H."/>
            <person name="Masuho Y."/>
            <person name="Yamashita R."/>
            <person name="Nakai K."/>
            <person name="Yada T."/>
            <person name="Nakamura Y."/>
            <person name="Ohara O."/>
            <person name="Isogai T."/>
            <person name="Sugano S."/>
        </authorList>
    </citation>
    <scope>NUCLEOTIDE SEQUENCE [LARGE SCALE MRNA]</scope>
    <source>
        <tissue>Amygdala</tissue>
    </source>
</reference>
<reference key="5">
    <citation type="submission" date="2004-06" db="EMBL/GenBank/DDBJ databases">
        <title>Cloning of human full open reading frames in Gateway(TM) system entry vector (pDONR201).</title>
        <authorList>
            <person name="Ebert L."/>
            <person name="Schick M."/>
            <person name="Neubert P."/>
            <person name="Schatten R."/>
            <person name="Henze S."/>
            <person name="Korn B."/>
        </authorList>
    </citation>
    <scope>NUCLEOTIDE SEQUENCE [LARGE SCALE MRNA]</scope>
</reference>
<reference key="6">
    <citation type="journal article" date="2004" name="Genome Res.">
        <title>The status, quality, and expansion of the NIH full-length cDNA project: the Mammalian Gene Collection (MGC).</title>
        <authorList>
            <consortium name="The MGC Project Team"/>
        </authorList>
    </citation>
    <scope>NUCLEOTIDE SEQUENCE [LARGE SCALE MRNA]</scope>
    <source>
        <tissue>Skin</tissue>
    </source>
</reference>
<reference key="7">
    <citation type="journal article" date="1991" name="C. R. Acad. Sci. III, Sci. Vie">
        <title>Expression of a gene encoding a novel potential IGF binding protein in human tissues.</title>
        <authorList>
            <person name="Martinerie C."/>
            <person name="Perbal B."/>
        </authorList>
    </citation>
    <scope>NUCLEOTIDE SEQUENCE [MRNA] OF 26-102</scope>
    <scope>TISSUE SPECIFICITY</scope>
</reference>
<reference key="8">
    <citation type="journal article" date="2004" name="Protein Sci.">
        <title>Signal peptide prediction based on analysis of experimentally verified cleavage sites.</title>
        <authorList>
            <person name="Zhang Z."/>
            <person name="Henzel W.J."/>
        </authorList>
    </citation>
    <scope>PROTEIN SEQUENCE OF 32-46</scope>
</reference>
<reference key="9">
    <citation type="journal article" date="1999" name="Proc. Natl. Acad. Sci. U.S.A.">
        <title>The C-terminal domain of the regulatory protein NOVH is sufficient to promote interaction with fibulin 1C: a clue for a role of NOVH in cell-adhesion signaling.</title>
        <authorList>
            <person name="Perbal B."/>
            <person name="Martinerie C."/>
            <person name="Sainson R."/>
            <person name="Werner M."/>
            <person name="He B."/>
            <person name="Roizman B."/>
        </authorList>
    </citation>
    <scope>INTERACTION WITH FBLN1</scope>
</reference>
<reference key="10">
    <citation type="journal article" date="2002" name="J. Biol. Chem.">
        <title>The nephroblastoma overexpressed gene (NOV/ccn3) protein associates with Notch1 extracellular domain and inhibits myoblast differentiation via Notch signaling pathway.</title>
        <authorList>
            <person name="Sakamoto K."/>
            <person name="Yamaguchi S."/>
            <person name="Ando R."/>
            <person name="Miyawaki A."/>
            <person name="Kabasawa Y."/>
            <person name="Takagi M."/>
            <person name="Li C.L."/>
            <person name="Perbal B."/>
            <person name="Katsube K."/>
        </authorList>
    </citation>
    <scope>FUNCTION</scope>
    <scope>INTERACTION WITH NOTCH1</scope>
</reference>
<reference key="11">
    <citation type="journal article" date="2003" name="J. Biol. Chem.">
        <title>CCN3 (NOV) is a novel angiogenic regulator of the CCN protein family.</title>
        <authorList>
            <person name="Lin C.G."/>
            <person name="Leu S.J."/>
            <person name="Chen N."/>
            <person name="Tebeau C.M."/>
            <person name="Lin S.X."/>
            <person name="Yeung C.Y."/>
            <person name="Lau L.F."/>
        </authorList>
    </citation>
    <scope>FUNCTION</scope>
    <scope>INTERACTION WITH ITGA5; ITGAV; ITGB1 AND ITGB3</scope>
</reference>
<reference key="12">
    <citation type="journal article" date="2003" name="Mol. Pathol.">
        <title>Proposal for a unified CCN nomenclature.</title>
        <authorList>
            <person name="Brigstock D.R."/>
            <person name="Goldschmeding R."/>
            <person name="Katsube K.I."/>
            <person name="Lam S.C."/>
            <person name="Lau L.F."/>
            <person name="Lyons K."/>
            <person name="Naus C."/>
            <person name="Perbal B."/>
            <person name="Riser B."/>
            <person name="Takigawa M."/>
            <person name="Yeger H."/>
        </authorList>
    </citation>
    <scope>NOMENCLATURE</scope>
</reference>
<reference key="13">
    <citation type="journal article" date="2004" name="J. Biol. Chem.">
        <title>Connexin43 interacts with NOV: a possible mechanism for negative regulation of cell growth in choriocarcinoma cells.</title>
        <authorList>
            <person name="Gellhaus A."/>
            <person name="Dong X."/>
            <person name="Propson S."/>
            <person name="Maass K."/>
            <person name="Klein-Hitpass L."/>
            <person name="Kibschull M."/>
            <person name="Traub O."/>
            <person name="Willecke K."/>
            <person name="Perbal B."/>
            <person name="Lye S.J."/>
            <person name="Winterhager E."/>
        </authorList>
    </citation>
    <scope>FUNCTION</scope>
    <scope>INTERACTION WITH GJA1</scope>
    <scope>SUBCELLULAR LOCATION</scope>
</reference>
<reference key="14">
    <citation type="journal article" date="2004" name="J. Biol. Chem.">
        <title>CCN3 (NOV) interacts with connexin43 in C6 glioma cells: possible mechanism of connexin-mediated growth suppression.</title>
        <authorList>
            <person name="Fu C.T."/>
            <person name="Bechberger J.F."/>
            <person name="Ozog M.A."/>
            <person name="Perbal B."/>
            <person name="Naus C.C."/>
        </authorList>
    </citation>
    <scope>INTERACTION WITH GJA1</scope>
</reference>
<reference key="15">
    <citation type="journal article" date="2005" name="J. Biol. Chem.">
        <title>Integrin-dependent functions of the angiogenic inducer NOV (CCN3): implication in wound healing.</title>
        <authorList>
            <person name="Lin C.G."/>
            <person name="Chen C.C."/>
            <person name="Leu S.J."/>
            <person name="Grzeszkiewicz T.M."/>
            <person name="Lau L.F."/>
        </authorList>
    </citation>
    <scope>FUNCTION</scope>
    <scope>INTERACTION WITH ITGAV AND ITGB5</scope>
</reference>
<reference key="16">
    <citation type="journal article" date="2007" name="Science">
        <title>NOV (CCN3) functions as a regulator of human hematopoietic stem or progenitor cells.</title>
        <authorList>
            <person name="Gupta R."/>
            <person name="Hong D."/>
            <person name="Iborra F."/>
            <person name="Sarno S."/>
            <person name="Enver T."/>
        </authorList>
    </citation>
    <scope>FUNCTION</scope>
    <scope>DEVELOPMENTAL STAGE</scope>
</reference>
<reference key="17">
    <citation type="journal article" date="2010" name="Arterioscler. Thromb. Vasc. Biol.">
        <title>CCN3 inhibits neointimal hyperplasia through modulation of smooth muscle cell growth and migration.</title>
        <authorList>
            <person name="Shimoyama T."/>
            <person name="Hiraoka S."/>
            <person name="Takemoto M."/>
            <person name="Koshizaka M."/>
            <person name="Tokuyama H."/>
            <person name="Tokuyama T."/>
            <person name="Watanabe A."/>
            <person name="Fujimoto M."/>
            <person name="Kawamura H."/>
            <person name="Sato S."/>
            <person name="Tsurutani Y."/>
            <person name="Saito Y."/>
            <person name="Perbal B."/>
            <person name="Koseki H."/>
            <person name="Yokote K."/>
        </authorList>
    </citation>
    <scope>FUNCTION</scope>
</reference>
<reference key="18">
    <citation type="journal article" date="2010" name="J. Cell Commun. Signal.">
        <title>A novel role of CCN3 in regulating endothelial inflammation.</title>
        <authorList>
            <person name="Lin Z."/>
            <person name="Natesan V."/>
            <person name="Shi H."/>
            <person name="Hamik A."/>
            <person name="Kawanami D."/>
            <person name="Hao C."/>
            <person name="Mahabaleshwar G.H."/>
            <person name="Wang W."/>
            <person name="Jin Z.G."/>
            <person name="Atkins G.B."/>
            <person name="Firth S.M."/>
            <person name="Rittie L."/>
            <person name="Perbal B."/>
            <person name="Jain M.K."/>
        </authorList>
    </citation>
    <scope>FUNCTION</scope>
    <scope>INDUCTION BY LAMINAR SHEAR STRESS; STATINS AND TNF</scope>
    <scope>TISSUE SPECIFICITY</scope>
</reference>
<reference key="19">
    <citation type="journal article" date="2011" name="FEBS Lett.">
        <title>Novel effects of CCN3 that may direct the differentiation of chondrocytes.</title>
        <authorList>
            <person name="Janune D."/>
            <person name="Kubota S."/>
            <person name="Nishida T."/>
            <person name="Kawaki H."/>
            <person name="Perbal B."/>
            <person name="Iida S."/>
            <person name="Takigawa M."/>
        </authorList>
    </citation>
    <scope>FUNCTION</scope>
</reference>
<reference key="20">
    <citation type="journal article" date="2011" name="J. Cell. Physiol.">
        <title>CCN3 increases cell motility and MMP-13 expression in human chondrosarcoma through integrin-dependent pathway.</title>
        <authorList>
            <person name="Tzeng H.E."/>
            <person name="Chen J.C."/>
            <person name="Tsai C.H."/>
            <person name="Kuo C.C."/>
            <person name="Hsu H.C."/>
            <person name="Hwang W.L."/>
            <person name="Fong Y.C."/>
            <person name="Tang C.H."/>
        </authorList>
    </citation>
    <scope>FUNCTION</scope>
</reference>
<reference key="21">
    <citation type="journal article" date="2014" name="PLoS ONE">
        <title>Overexpression of CCN3 inhibits inflammation and progression of atherosclerosis in apolipoprotein E-deficient mice.</title>
        <authorList>
            <person name="Liu J."/>
            <person name="Ren Y."/>
            <person name="Kang L."/>
            <person name="Zhang L."/>
        </authorList>
    </citation>
    <scope>INDUCTION BY TNF AND IL1B</scope>
</reference>
<reference key="22">
    <citation type="journal article" date="2024" name="Nature">
        <title>A maternal brain hormone that builds bone.</title>
        <authorList>
            <person name="Babey M.E."/>
            <person name="Krause W.C."/>
            <person name="Chen K."/>
            <person name="Herber C.B."/>
            <person name="Torok Z."/>
            <person name="Nikkanen J."/>
            <person name="Rodriguez R."/>
            <person name="Zhang X."/>
            <person name="Castro-Navarro F."/>
            <person name="Wang Y."/>
            <person name="Wheeler E.E."/>
            <person name="Villeda S."/>
            <person name="Leach J.K."/>
            <person name="Lane N.E."/>
            <person name="Scheller E.L."/>
            <person name="Chan C.K.F."/>
            <person name="Ambrosi T.H."/>
            <person name="Ingraham H.A."/>
        </authorList>
    </citation>
    <scope>FUNCTION</scope>
</reference>
<name>CCN3_HUMAN</name>
<dbReference type="EMBL" id="X78351">
    <property type="protein sequence ID" value="CAA55146.1"/>
    <property type="molecule type" value="Genomic_DNA"/>
</dbReference>
<dbReference type="EMBL" id="X78352">
    <property type="protein sequence ID" value="CAA55146.1"/>
    <property type="status" value="JOINED"/>
    <property type="molecule type" value="Genomic_DNA"/>
</dbReference>
<dbReference type="EMBL" id="X78353">
    <property type="protein sequence ID" value="CAA55146.1"/>
    <property type="status" value="JOINED"/>
    <property type="molecule type" value="Genomic_DNA"/>
</dbReference>
<dbReference type="EMBL" id="X78354">
    <property type="protein sequence ID" value="CAA55146.1"/>
    <property type="status" value="JOINED"/>
    <property type="molecule type" value="Genomic_DNA"/>
</dbReference>
<dbReference type="EMBL" id="X96584">
    <property type="protein sequence ID" value="CAA65403.1"/>
    <property type="molecule type" value="mRNA"/>
</dbReference>
<dbReference type="EMBL" id="AY082381">
    <property type="protein sequence ID" value="AAL92490.1"/>
    <property type="molecule type" value="mRNA"/>
</dbReference>
<dbReference type="EMBL" id="AK312355">
    <property type="protein sequence ID" value="BAG35274.1"/>
    <property type="molecule type" value="mRNA"/>
</dbReference>
<dbReference type="EMBL" id="CR457432">
    <property type="protein sequence ID" value="CAG33713.1"/>
    <property type="molecule type" value="mRNA"/>
</dbReference>
<dbReference type="EMBL" id="BC015028">
    <property type="protein sequence ID" value="AAH15028.1"/>
    <property type="molecule type" value="mRNA"/>
</dbReference>
<dbReference type="CCDS" id="CCDS6328.1"/>
<dbReference type="PIR" id="I38069">
    <property type="entry name" value="I38069"/>
</dbReference>
<dbReference type="RefSeq" id="NP_002505.1">
    <property type="nucleotide sequence ID" value="NM_002514.4"/>
</dbReference>
<dbReference type="SMR" id="P48745"/>
<dbReference type="BioGRID" id="110918">
    <property type="interactions" value="41"/>
</dbReference>
<dbReference type="CORUM" id="P48745"/>
<dbReference type="FunCoup" id="P48745">
    <property type="interactions" value="257"/>
</dbReference>
<dbReference type="IntAct" id="P48745">
    <property type="interactions" value="21"/>
</dbReference>
<dbReference type="MINT" id="P48745"/>
<dbReference type="STRING" id="9606.ENSP00000259526"/>
<dbReference type="DrugBank" id="DB00030">
    <property type="generic name" value="Insulin human"/>
</dbReference>
<dbReference type="TCDB" id="8.A.87.1.6">
    <property type="family name" value="the tbc1 domain (tbc1) family"/>
</dbReference>
<dbReference type="GlyCosmos" id="P48745">
    <property type="glycosylation" value="2 sites, No reported glycans"/>
</dbReference>
<dbReference type="GlyGen" id="P48745">
    <property type="glycosylation" value="9 sites, 1 N-linked glycan (1 site), 2 O-linked glycans (6 sites)"/>
</dbReference>
<dbReference type="iPTMnet" id="P48745"/>
<dbReference type="PhosphoSitePlus" id="P48745"/>
<dbReference type="SwissPalm" id="P48745"/>
<dbReference type="BioMuta" id="NOV"/>
<dbReference type="DMDM" id="1352515"/>
<dbReference type="jPOST" id="P48745"/>
<dbReference type="MassIVE" id="P48745"/>
<dbReference type="PaxDb" id="9606-ENSP00000259526"/>
<dbReference type="PeptideAtlas" id="P48745"/>
<dbReference type="ProteomicsDB" id="55942"/>
<dbReference type="Antibodypedia" id="13650">
    <property type="antibodies" value="395 antibodies from 36 providers"/>
</dbReference>
<dbReference type="DNASU" id="4856"/>
<dbReference type="Ensembl" id="ENST00000259526.4">
    <property type="protein sequence ID" value="ENSP00000259526.3"/>
    <property type="gene ID" value="ENSG00000136999.5"/>
</dbReference>
<dbReference type="GeneID" id="4856"/>
<dbReference type="KEGG" id="hsa:4856"/>
<dbReference type="MANE-Select" id="ENST00000259526.4">
    <property type="protein sequence ID" value="ENSP00000259526.3"/>
    <property type="RefSeq nucleotide sequence ID" value="NM_002514.4"/>
    <property type="RefSeq protein sequence ID" value="NP_002505.1"/>
</dbReference>
<dbReference type="UCSC" id="uc003yoq.3">
    <property type="organism name" value="human"/>
</dbReference>
<dbReference type="AGR" id="HGNC:7885"/>
<dbReference type="CTD" id="4856"/>
<dbReference type="DisGeNET" id="4856"/>
<dbReference type="GeneCards" id="CCN3"/>
<dbReference type="HGNC" id="HGNC:7885">
    <property type="gene designation" value="CCN3"/>
</dbReference>
<dbReference type="HPA" id="ENSG00000136999">
    <property type="expression patterns" value="Tissue enriched (adrenal)"/>
</dbReference>
<dbReference type="MalaCards" id="CCN3"/>
<dbReference type="MIM" id="164958">
    <property type="type" value="gene"/>
</dbReference>
<dbReference type="neXtProt" id="NX_P48745"/>
<dbReference type="OpenTargets" id="ENSG00000136999"/>
<dbReference type="PharmGKB" id="PA31687"/>
<dbReference type="VEuPathDB" id="HostDB:ENSG00000136999"/>
<dbReference type="eggNOG" id="ENOG502QR9V">
    <property type="taxonomic scope" value="Eukaryota"/>
</dbReference>
<dbReference type="GeneTree" id="ENSGT00940000159963"/>
<dbReference type="HOGENOM" id="CLU_063247_1_0_1"/>
<dbReference type="InParanoid" id="P48745"/>
<dbReference type="OMA" id="PRCNHDL"/>
<dbReference type="OrthoDB" id="365605at2759"/>
<dbReference type="PAN-GO" id="P48745">
    <property type="GO annotations" value="6 GO annotations based on evolutionary models"/>
</dbReference>
<dbReference type="PhylomeDB" id="P48745"/>
<dbReference type="TreeFam" id="TF326070"/>
<dbReference type="PathwayCommons" id="P48745"/>
<dbReference type="SignaLink" id="P48745"/>
<dbReference type="SIGNOR" id="P48745"/>
<dbReference type="BioGRID-ORCS" id="4856">
    <property type="hits" value="13 hits in 1147 CRISPR screens"/>
</dbReference>
<dbReference type="ChiTaRS" id="NOV">
    <property type="organism name" value="human"/>
</dbReference>
<dbReference type="GeneWiki" id="NOV_(gene)"/>
<dbReference type="GenomeRNAi" id="4856"/>
<dbReference type="Pharos" id="P48745">
    <property type="development level" value="Tbio"/>
</dbReference>
<dbReference type="PRO" id="PR:P48745"/>
<dbReference type="Proteomes" id="UP000005640">
    <property type="component" value="Chromosome 8"/>
</dbReference>
<dbReference type="RNAct" id="P48745">
    <property type="molecule type" value="protein"/>
</dbReference>
<dbReference type="Bgee" id="ENSG00000136999">
    <property type="expression patterns" value="Expressed in right coronary artery and 167 other cell types or tissues"/>
</dbReference>
<dbReference type="ExpressionAtlas" id="P48745">
    <property type="expression patterns" value="baseline and differential"/>
</dbReference>
<dbReference type="GO" id="GO:0005737">
    <property type="term" value="C:cytoplasm"/>
    <property type="evidence" value="ECO:0000315"/>
    <property type="project" value="UniProtKB"/>
</dbReference>
<dbReference type="GO" id="GO:0005829">
    <property type="term" value="C:cytosol"/>
    <property type="evidence" value="ECO:0000314"/>
    <property type="project" value="HPA"/>
</dbReference>
<dbReference type="GO" id="GO:0031012">
    <property type="term" value="C:extracellular matrix"/>
    <property type="evidence" value="ECO:0000318"/>
    <property type="project" value="GO_Central"/>
</dbReference>
<dbReference type="GO" id="GO:0005576">
    <property type="term" value="C:extracellular region"/>
    <property type="evidence" value="ECO:0000250"/>
    <property type="project" value="UniProtKB"/>
</dbReference>
<dbReference type="GO" id="GO:0005615">
    <property type="term" value="C:extracellular space"/>
    <property type="evidence" value="ECO:0000318"/>
    <property type="project" value="GO_Central"/>
</dbReference>
<dbReference type="GO" id="GO:0005921">
    <property type="term" value="C:gap junction"/>
    <property type="evidence" value="ECO:0000315"/>
    <property type="project" value="UniProtKB"/>
</dbReference>
<dbReference type="GO" id="GO:0043231">
    <property type="term" value="C:intracellular membrane-bounded organelle"/>
    <property type="evidence" value="ECO:0000314"/>
    <property type="project" value="HPA"/>
</dbReference>
<dbReference type="GO" id="GO:0008083">
    <property type="term" value="F:growth factor activity"/>
    <property type="evidence" value="ECO:0007669"/>
    <property type="project" value="UniProtKB-KW"/>
</dbReference>
<dbReference type="GO" id="GO:0008201">
    <property type="term" value="F:heparin binding"/>
    <property type="evidence" value="ECO:0000318"/>
    <property type="project" value="GO_Central"/>
</dbReference>
<dbReference type="GO" id="GO:0005179">
    <property type="term" value="F:hormone activity"/>
    <property type="evidence" value="ECO:0000250"/>
    <property type="project" value="UniProtKB"/>
</dbReference>
<dbReference type="GO" id="GO:0005178">
    <property type="term" value="F:integrin binding"/>
    <property type="evidence" value="ECO:0000353"/>
    <property type="project" value="UniProtKB"/>
</dbReference>
<dbReference type="GO" id="GO:0005112">
    <property type="term" value="F:Notch binding"/>
    <property type="evidence" value="ECO:0000353"/>
    <property type="project" value="UniProtKB"/>
</dbReference>
<dbReference type="GO" id="GO:0001525">
    <property type="term" value="P:angiogenesis"/>
    <property type="evidence" value="ECO:0000314"/>
    <property type="project" value="UniProtKB"/>
</dbReference>
<dbReference type="GO" id="GO:1990523">
    <property type="term" value="P:bone regeneration"/>
    <property type="evidence" value="ECO:0000250"/>
    <property type="project" value="UniProtKB"/>
</dbReference>
<dbReference type="GO" id="GO:0007155">
    <property type="term" value="P:cell adhesion"/>
    <property type="evidence" value="ECO:0000318"/>
    <property type="project" value="GO_Central"/>
</dbReference>
<dbReference type="GO" id="GO:0033627">
    <property type="term" value="P:cell adhesion mediated by integrin"/>
    <property type="evidence" value="ECO:0000314"/>
    <property type="project" value="UniProtKB"/>
</dbReference>
<dbReference type="GO" id="GO:0060326">
    <property type="term" value="P:cell chemotaxis"/>
    <property type="evidence" value="ECO:0000314"/>
    <property type="project" value="UniProtKB"/>
</dbReference>
<dbReference type="GO" id="GO:0002062">
    <property type="term" value="P:chondrocyte differentiation"/>
    <property type="evidence" value="ECO:0000315"/>
    <property type="project" value="UniProtKB"/>
</dbReference>
<dbReference type="GO" id="GO:0035767">
    <property type="term" value="P:endothelial cell chemotaxis"/>
    <property type="evidence" value="ECO:0000314"/>
    <property type="project" value="UniProtKB"/>
</dbReference>
<dbReference type="GO" id="GO:0071603">
    <property type="term" value="P:endothelial cell-cell adhesion"/>
    <property type="evidence" value="ECO:0000314"/>
    <property type="project" value="UniProtKB"/>
</dbReference>
<dbReference type="GO" id="GO:0010761">
    <property type="term" value="P:fibroblast migration"/>
    <property type="evidence" value="ECO:0000314"/>
    <property type="project" value="UniProtKB"/>
</dbReference>
<dbReference type="GO" id="GO:0061484">
    <property type="term" value="P:hematopoietic stem cell homeostasis"/>
    <property type="evidence" value="ECO:0000315"/>
    <property type="project" value="UniProtKB"/>
</dbReference>
<dbReference type="GO" id="GO:0030308">
    <property type="term" value="P:negative regulation of cell growth"/>
    <property type="evidence" value="ECO:0000315"/>
    <property type="project" value="UniProtKB"/>
</dbReference>
<dbReference type="GO" id="GO:1902731">
    <property type="term" value="P:negative regulation of chondrocyte proliferation"/>
    <property type="evidence" value="ECO:0000315"/>
    <property type="project" value="UniProtKB"/>
</dbReference>
<dbReference type="GO" id="GO:0050728">
    <property type="term" value="P:negative regulation of inflammatory response"/>
    <property type="evidence" value="ECO:0000250"/>
    <property type="project" value="UniProtKB"/>
</dbReference>
<dbReference type="GO" id="GO:0046676">
    <property type="term" value="P:negative regulation of insulin secretion"/>
    <property type="evidence" value="ECO:0000250"/>
    <property type="project" value="UniProtKB"/>
</dbReference>
<dbReference type="GO" id="GO:0090027">
    <property type="term" value="P:negative regulation of monocyte chemotaxis"/>
    <property type="evidence" value="ECO:0000315"/>
    <property type="project" value="UniProtKB"/>
</dbReference>
<dbReference type="GO" id="GO:0010832">
    <property type="term" value="P:negative regulation of myotube differentiation"/>
    <property type="evidence" value="ECO:0000314"/>
    <property type="project" value="UniProtKB"/>
</dbReference>
<dbReference type="GO" id="GO:1901223">
    <property type="term" value="P:negative regulation of non-canonical NF-kappaB signal transduction"/>
    <property type="evidence" value="ECO:0000315"/>
    <property type="project" value="UniProtKB"/>
</dbReference>
<dbReference type="GO" id="GO:1904057">
    <property type="term" value="P:negative regulation of sensory perception of pain"/>
    <property type="evidence" value="ECO:0000250"/>
    <property type="project" value="UniProtKB"/>
</dbReference>
<dbReference type="GO" id="GO:0060392">
    <property type="term" value="P:negative regulation of SMAD protein signal transduction"/>
    <property type="evidence" value="ECO:0000250"/>
    <property type="project" value="UniProtKB"/>
</dbReference>
<dbReference type="GO" id="GO:0045597">
    <property type="term" value="P:positive regulation of cell differentiation"/>
    <property type="evidence" value="ECO:0000318"/>
    <property type="project" value="GO_Central"/>
</dbReference>
<dbReference type="GO" id="GO:0045747">
    <property type="term" value="P:positive regulation of Notch signaling pathway"/>
    <property type="evidence" value="ECO:0000314"/>
    <property type="project" value="UniProtKB"/>
</dbReference>
<dbReference type="GO" id="GO:0045778">
    <property type="term" value="P:positive regulation of ossification"/>
    <property type="evidence" value="ECO:0000314"/>
    <property type="project" value="UniProtKB"/>
</dbReference>
<dbReference type="GO" id="GO:0007165">
    <property type="term" value="P:signal transduction"/>
    <property type="evidence" value="ECO:0000318"/>
    <property type="project" value="GO_Central"/>
</dbReference>
<dbReference type="GO" id="GO:0014909">
    <property type="term" value="P:smooth muscle cell migration"/>
    <property type="evidence" value="ECO:0000314"/>
    <property type="project" value="UniProtKB"/>
</dbReference>
<dbReference type="GO" id="GO:0048659">
    <property type="term" value="P:smooth muscle cell proliferation"/>
    <property type="evidence" value="ECO:0000314"/>
    <property type="project" value="UniProtKB"/>
</dbReference>
<dbReference type="GO" id="GO:0044342">
    <property type="term" value="P:type B pancreatic cell proliferation"/>
    <property type="evidence" value="ECO:0000250"/>
    <property type="project" value="UniProtKB"/>
</dbReference>
<dbReference type="FunFam" id="2.20.100.10:FF:000046">
    <property type="entry name" value="Cellular communication network factor 4"/>
    <property type="match status" value="1"/>
</dbReference>
<dbReference type="FunFam" id="2.10.70.10:FF:000015">
    <property type="entry name" value="CYR61 isoform 1"/>
    <property type="match status" value="1"/>
</dbReference>
<dbReference type="Gene3D" id="2.10.70.10">
    <property type="entry name" value="Complement Module, domain 1"/>
    <property type="match status" value="1"/>
</dbReference>
<dbReference type="Gene3D" id="2.20.100.10">
    <property type="entry name" value="Thrombospondin type-1 (TSP1) repeat"/>
    <property type="match status" value="1"/>
</dbReference>
<dbReference type="InterPro" id="IPR050941">
    <property type="entry name" value="CCN"/>
</dbReference>
<dbReference type="InterPro" id="IPR006207">
    <property type="entry name" value="Cys_knot_C"/>
</dbReference>
<dbReference type="InterPro" id="IPR006208">
    <property type="entry name" value="Glyco_hormone_CN"/>
</dbReference>
<dbReference type="InterPro" id="IPR009030">
    <property type="entry name" value="Growth_fac_rcpt_cys_sf"/>
</dbReference>
<dbReference type="InterPro" id="IPR000867">
    <property type="entry name" value="IGFBP-like"/>
</dbReference>
<dbReference type="InterPro" id="IPR012395">
    <property type="entry name" value="IGFBP_CNN"/>
</dbReference>
<dbReference type="InterPro" id="IPR017891">
    <property type="entry name" value="Insulin_GF-bd_Cys-rich_CS"/>
</dbReference>
<dbReference type="InterPro" id="IPR043973">
    <property type="entry name" value="TSP1_CCN"/>
</dbReference>
<dbReference type="InterPro" id="IPR000884">
    <property type="entry name" value="TSP1_rpt"/>
</dbReference>
<dbReference type="InterPro" id="IPR036383">
    <property type="entry name" value="TSP1_rpt_sf"/>
</dbReference>
<dbReference type="InterPro" id="IPR001007">
    <property type="entry name" value="VWF_dom"/>
</dbReference>
<dbReference type="PANTHER" id="PTHR11348:SF8">
    <property type="entry name" value="CCN FAMILY MEMBER 3"/>
    <property type="match status" value="1"/>
</dbReference>
<dbReference type="PANTHER" id="PTHR11348">
    <property type="entry name" value="CONNECTIVE TISSUE GROWTH FACTOR-RELATED"/>
    <property type="match status" value="1"/>
</dbReference>
<dbReference type="Pfam" id="PF00007">
    <property type="entry name" value="Cys_knot"/>
    <property type="match status" value="1"/>
</dbReference>
<dbReference type="Pfam" id="PF00219">
    <property type="entry name" value="IGFBP"/>
    <property type="match status" value="1"/>
</dbReference>
<dbReference type="Pfam" id="PF19035">
    <property type="entry name" value="TSP1_CCN"/>
    <property type="match status" value="1"/>
</dbReference>
<dbReference type="Pfam" id="PF00093">
    <property type="entry name" value="VWC"/>
    <property type="match status" value="1"/>
</dbReference>
<dbReference type="PIRSF" id="PIRSF036495">
    <property type="entry name" value="IGFBP_rP_CNN"/>
    <property type="match status" value="1"/>
</dbReference>
<dbReference type="SMART" id="SM00041">
    <property type="entry name" value="CT"/>
    <property type="match status" value="1"/>
</dbReference>
<dbReference type="SMART" id="SM00121">
    <property type="entry name" value="IB"/>
    <property type="match status" value="1"/>
</dbReference>
<dbReference type="SMART" id="SM00209">
    <property type="entry name" value="TSP1"/>
    <property type="match status" value="1"/>
</dbReference>
<dbReference type="SMART" id="SM00214">
    <property type="entry name" value="VWC"/>
    <property type="match status" value="1"/>
</dbReference>
<dbReference type="SUPFAM" id="SSF57603">
    <property type="entry name" value="FnI-like domain"/>
    <property type="match status" value="1"/>
</dbReference>
<dbReference type="SUPFAM" id="SSF57184">
    <property type="entry name" value="Growth factor receptor domain"/>
    <property type="match status" value="1"/>
</dbReference>
<dbReference type="SUPFAM" id="SSF82895">
    <property type="entry name" value="TSP-1 type 1 repeat"/>
    <property type="match status" value="1"/>
</dbReference>
<dbReference type="PROSITE" id="PS01185">
    <property type="entry name" value="CTCK_1"/>
    <property type="match status" value="1"/>
</dbReference>
<dbReference type="PROSITE" id="PS01225">
    <property type="entry name" value="CTCK_2"/>
    <property type="match status" value="1"/>
</dbReference>
<dbReference type="PROSITE" id="PS00222">
    <property type="entry name" value="IGFBP_N_1"/>
    <property type="match status" value="1"/>
</dbReference>
<dbReference type="PROSITE" id="PS51323">
    <property type="entry name" value="IGFBP_N_2"/>
    <property type="match status" value="1"/>
</dbReference>
<dbReference type="PROSITE" id="PS50092">
    <property type="entry name" value="TSP1"/>
    <property type="match status" value="1"/>
</dbReference>
<dbReference type="PROSITE" id="PS01208">
    <property type="entry name" value="VWFC_1"/>
    <property type="match status" value="1"/>
</dbReference>
<dbReference type="PROSITE" id="PS50184">
    <property type="entry name" value="VWFC_2"/>
    <property type="match status" value="1"/>
</dbReference>
<sequence length="357" mass="39162">MQSVQSTSFCLRKQCLCLTFLLLHLLGQVAATQRCPPQCPGRCPATPPTCAPGVRAVLDGCSCCLVCARQRGESCSDLEPCDESSGLYCDRSADPSNQTGICTAVEGDNCVFDGVIYRSGEKFQPSCKFQCTCRDGQIGCVPRCQLDVLLPEPNCPAPRKVEVPGECCEKWICGPDEEDSLGGLTLAAYRPEATLGVEVSDSSVNCIEQTTEWTACSKSCGMGFSTRVTNRNRQCEMLKQTRLCMVRPCEQEPEQPTDKKGKKCLRTKKSLKAIHLQFKNCTSLHTYKPRFCGVCSDGRCCTPHNTKTIQAEFQCSPGQIVKKPVMVIGTCTCHTNCPKNNEAFLQELELKTTRGKM</sequence>
<gene>
    <name evidence="26" type="primary">CCN3</name>
    <name type="synonym">IGFBP9</name>
    <name type="synonym">NOV</name>
    <name type="synonym">NOVH</name>
</gene>
<keyword id="KW-0965">Cell junction</keyword>
<keyword id="KW-0963">Cytoplasm</keyword>
<keyword id="KW-0903">Direct protein sequencing</keyword>
<keyword id="KW-1015">Disulfide bond</keyword>
<keyword id="KW-0303">Gap junction</keyword>
<keyword id="KW-0325">Glycoprotein</keyword>
<keyword id="KW-0339">Growth factor</keyword>
<keyword id="KW-0372">Hormone</keyword>
<keyword id="KW-0449">Lipoprotein</keyword>
<keyword id="KW-0564">Palmitate</keyword>
<keyword id="KW-1267">Proteomics identification</keyword>
<keyword id="KW-1185">Reference proteome</keyword>
<keyword id="KW-0964">Secreted</keyword>
<keyword id="KW-0732">Signal</keyword>